<protein>
    <recommendedName>
        <fullName evidence="4">Diphthamide biosynthesis protein 3</fullName>
    </recommendedName>
    <alternativeName>
        <fullName>CSL-type zinc finger-containing protein 2</fullName>
    </alternativeName>
    <alternativeName>
        <fullName>Diphtheria toxin and Pseudomonas exotoxin A sensitivity-required protein 1</fullName>
    </alternativeName>
</protein>
<organism>
    <name type="scientific">Cricetulus griseus</name>
    <name type="common">Chinese hamster</name>
    <name type="synonym">Cricetulus barabensis griseus</name>
    <dbReference type="NCBI Taxonomy" id="10029"/>
    <lineage>
        <taxon>Eukaryota</taxon>
        <taxon>Metazoa</taxon>
        <taxon>Chordata</taxon>
        <taxon>Craniata</taxon>
        <taxon>Vertebrata</taxon>
        <taxon>Euteleostomi</taxon>
        <taxon>Mammalia</taxon>
        <taxon>Eutheria</taxon>
        <taxon>Euarchontoglires</taxon>
        <taxon>Glires</taxon>
        <taxon>Rodentia</taxon>
        <taxon>Myomorpha</taxon>
        <taxon>Muroidea</taxon>
        <taxon>Cricetidae</taxon>
        <taxon>Cricetinae</taxon>
        <taxon>Cricetulus</taxon>
    </lineage>
</organism>
<keyword id="KW-0963">Cytoplasm</keyword>
<keyword id="KW-0408">Iron</keyword>
<keyword id="KW-0479">Metal-binding</keyword>
<keyword id="KW-0539">Nucleus</keyword>
<sequence length="82" mass="9302">MAVFHDEVEIEDFQYDEDSETYFYPCPCGDNFSITKEDLENGEDVATCPSCSLIIKVIYDKDQFMCGETVPAPSTNKELVKC</sequence>
<accession>Q6VUC1</accession>
<feature type="chain" id="PRO_0000082619" description="Diphthamide biosynthesis protein 3">
    <location>
        <begin position="1"/>
        <end position="82"/>
    </location>
</feature>
<feature type="domain" description="DPH-type MB" evidence="3">
    <location>
        <begin position="4"/>
        <end position="60"/>
    </location>
</feature>
<feature type="binding site" evidence="2">
    <location>
        <position position="26"/>
    </location>
    <ligand>
        <name>Fe cation</name>
        <dbReference type="ChEBI" id="CHEBI:24875"/>
    </ligand>
</feature>
<feature type="binding site" evidence="2">
    <location>
        <position position="28"/>
    </location>
    <ligand>
        <name>Fe cation</name>
        <dbReference type="ChEBI" id="CHEBI:24875"/>
    </ligand>
</feature>
<feature type="binding site" evidence="2">
    <location>
        <position position="48"/>
    </location>
    <ligand>
        <name>Fe cation</name>
        <dbReference type="ChEBI" id="CHEBI:24875"/>
    </ligand>
</feature>
<feature type="binding site" evidence="2">
    <location>
        <position position="51"/>
    </location>
    <ligand>
        <name>Fe cation</name>
        <dbReference type="ChEBI" id="CHEBI:24875"/>
    </ligand>
</feature>
<evidence type="ECO:0000250" key="1">
    <source>
        <dbReference type="UniProtKB" id="Q3E840"/>
    </source>
</evidence>
<evidence type="ECO:0000250" key="2">
    <source>
        <dbReference type="UniProtKB" id="Q96FX2"/>
    </source>
</evidence>
<evidence type="ECO:0000255" key="3">
    <source>
        <dbReference type="PROSITE-ProRule" id="PRU00456"/>
    </source>
</evidence>
<evidence type="ECO:0000305" key="4"/>
<gene>
    <name type="primary">DPH3</name>
    <name type="synonym">DESR1</name>
    <name type="synonym">ZCSL2</name>
</gene>
<dbReference type="EMBL" id="AY326451">
    <property type="protein sequence ID" value="AAQ83755.1"/>
    <property type="molecule type" value="Genomic_DNA"/>
</dbReference>
<dbReference type="RefSeq" id="NP_001231467.1">
    <property type="nucleotide sequence ID" value="NM_001244538.1"/>
</dbReference>
<dbReference type="RefSeq" id="XP_003495350.1">
    <property type="nucleotide sequence ID" value="XM_003495302.3"/>
</dbReference>
<dbReference type="SMR" id="Q6VUC1"/>
<dbReference type="PaxDb" id="10029-NP_001231467.1"/>
<dbReference type="Ensembl" id="ENSCGRT00001010981.1">
    <property type="protein sequence ID" value="ENSCGRP00001006985.1"/>
    <property type="gene ID" value="ENSCGRG00001009461.1"/>
</dbReference>
<dbReference type="Ensembl" id="ENSCGRT00001014306.1">
    <property type="protein sequence ID" value="ENSCGRP00001010086.1"/>
    <property type="gene ID" value="ENSCGRG00001012063.1"/>
</dbReference>
<dbReference type="GeneID" id="100689295"/>
<dbReference type="GeneID" id="100768092"/>
<dbReference type="CTD" id="285381"/>
<dbReference type="eggNOG" id="KOG2923">
    <property type="taxonomic scope" value="Eukaryota"/>
</dbReference>
<dbReference type="GeneTree" id="ENSGT00390000007225"/>
<dbReference type="OMA" id="IYDPDMF"/>
<dbReference type="OrthoDB" id="66964at2759"/>
<dbReference type="UniPathway" id="UPA00559"/>
<dbReference type="Proteomes" id="UP000694386">
    <property type="component" value="Unplaced"/>
</dbReference>
<dbReference type="Proteomes" id="UP001108280">
    <property type="component" value="Unplaced"/>
</dbReference>
<dbReference type="GO" id="GO:0005737">
    <property type="term" value="C:cytoplasm"/>
    <property type="evidence" value="ECO:0000250"/>
    <property type="project" value="UniProtKB"/>
</dbReference>
<dbReference type="GO" id="GO:0005634">
    <property type="term" value="C:nucleus"/>
    <property type="evidence" value="ECO:0000250"/>
    <property type="project" value="UniProtKB"/>
</dbReference>
<dbReference type="GO" id="GO:0008198">
    <property type="term" value="F:ferrous iron binding"/>
    <property type="evidence" value="ECO:0000250"/>
    <property type="project" value="UniProtKB"/>
</dbReference>
<dbReference type="GO" id="GO:0034986">
    <property type="term" value="F:iron chaperone activity"/>
    <property type="evidence" value="ECO:0000250"/>
    <property type="project" value="UniProtKB"/>
</dbReference>
<dbReference type="GO" id="GO:0050709">
    <property type="term" value="P:negative regulation of protein secretion"/>
    <property type="evidence" value="ECO:0000250"/>
    <property type="project" value="UniProtKB"/>
</dbReference>
<dbReference type="GO" id="GO:0051099">
    <property type="term" value="P:positive regulation of binding"/>
    <property type="evidence" value="ECO:0000250"/>
    <property type="project" value="UniProtKB"/>
</dbReference>
<dbReference type="GO" id="GO:0017183">
    <property type="term" value="P:protein histidyl modification to diphthamide"/>
    <property type="evidence" value="ECO:0000314"/>
    <property type="project" value="UniProtKB"/>
</dbReference>
<dbReference type="GO" id="GO:0002926">
    <property type="term" value="P:tRNA wobble base 5-methoxycarbonylmethyl-2-thiouridinylation"/>
    <property type="evidence" value="ECO:0000250"/>
    <property type="project" value="UniProtKB"/>
</dbReference>
<dbReference type="FunFam" id="3.10.660.10:FF:000001">
    <property type="entry name" value="Diphthamide biosynthesis 3"/>
    <property type="match status" value="1"/>
</dbReference>
<dbReference type="Gene3D" id="3.10.660.10">
    <property type="entry name" value="DPH Zinc finger"/>
    <property type="match status" value="1"/>
</dbReference>
<dbReference type="InterPro" id="IPR044248">
    <property type="entry name" value="DPH3/4-like"/>
</dbReference>
<dbReference type="InterPro" id="IPR007872">
    <property type="entry name" value="DPH_MB_dom"/>
</dbReference>
<dbReference type="InterPro" id="IPR036671">
    <property type="entry name" value="DPH_MB_sf"/>
</dbReference>
<dbReference type="PANTHER" id="PTHR21454:SF31">
    <property type="entry name" value="DIPHTHAMIDE BIOSYNTHESIS PROTEIN 3"/>
    <property type="match status" value="1"/>
</dbReference>
<dbReference type="PANTHER" id="PTHR21454">
    <property type="entry name" value="DPH3 HOMOLOG-RELATED"/>
    <property type="match status" value="1"/>
</dbReference>
<dbReference type="Pfam" id="PF05207">
    <property type="entry name" value="Zn_ribbon_CSL"/>
    <property type="match status" value="1"/>
</dbReference>
<dbReference type="SUPFAM" id="SSF144217">
    <property type="entry name" value="CSL zinc finger"/>
    <property type="match status" value="1"/>
</dbReference>
<dbReference type="PROSITE" id="PS51074">
    <property type="entry name" value="DPH_MB"/>
    <property type="match status" value="1"/>
</dbReference>
<comment type="function">
    <text evidence="1">Required for the first step of diphthamide biosynthesis, a post-translational modification of histidine which occurs in elongation factor 2. DPH1 and DPH2 transfer a 3-amino-3-carboxypropyl (ACP) group from S-adenosyl-L-methionine (SAM) to a histidine residue, the reaction is assisted by a reduction system comprising DPH3 and a NADH-dependent reductase. Acts as an electron donor to reduce the Fe-S cluster in DPH1-DPH2 keeping the [4Fe-4S] clusters in the active and reduced state. Restores iron to DPH1-DPH2 iron-sulfur clusters which have degraded from [4Fe-4S] to [3Fe-4S] by donating an iron atom to reform [4Fe-4S] clusters, in a manner dependent on the presence of elongation factor 2 and SAM. Associates with the elongator complex and is required for tRNA Wobble base modifications mediated by the elongator complex. The elongator complex is required for multiple tRNA modifications, including mcm5U (5-methoxycarbonylmethyl uridine), mcm5s 2U (5-methoxycarbonylmethyl-2-thiouridine), and ncm5U (5-carbamoylmethyl uridine).</text>
</comment>
<comment type="catalytic activity">
    <reaction evidence="1">
        <text>[3Fe-4S](1+)-[protein] + Fe(2+)-[Dph3] = [3Fe-4S](0)-[protein] + Fe(3+)-[Dph3]</text>
        <dbReference type="Rhea" id="RHEA:71235"/>
        <dbReference type="Rhea" id="RHEA-COMP:17996"/>
        <dbReference type="Rhea" id="RHEA-COMP:17997"/>
        <dbReference type="Rhea" id="RHEA-COMP:18002"/>
        <dbReference type="Rhea" id="RHEA-COMP:18003"/>
        <dbReference type="ChEBI" id="CHEBI:29033"/>
        <dbReference type="ChEBI" id="CHEBI:29034"/>
        <dbReference type="ChEBI" id="CHEBI:33751"/>
        <dbReference type="ChEBI" id="CHEBI:47402"/>
        <dbReference type="ChEBI" id="CHEBI:83228"/>
    </reaction>
</comment>
<comment type="catalytic activity">
    <reaction evidence="1">
        <text>2 [3Fe-4S](0)-[protein] + 2 Fe(2+)-[Dph3] + NADH = 2 [4Fe-4S](1+)-[protein] + 2 [Dph3] + NAD(+) + H(+)</text>
        <dbReference type="Rhea" id="RHEA:71239"/>
        <dbReference type="Rhea" id="RHEA-COMP:17997"/>
        <dbReference type="Rhea" id="RHEA-COMP:17998"/>
        <dbReference type="Rhea" id="RHEA-COMP:18001"/>
        <dbReference type="Rhea" id="RHEA-COMP:18002"/>
        <dbReference type="ChEBI" id="CHEBI:15378"/>
        <dbReference type="ChEBI" id="CHEBI:29033"/>
        <dbReference type="ChEBI" id="CHEBI:33723"/>
        <dbReference type="ChEBI" id="CHEBI:47402"/>
        <dbReference type="ChEBI" id="CHEBI:57540"/>
        <dbReference type="ChEBI" id="CHEBI:57945"/>
        <dbReference type="ChEBI" id="CHEBI:83228"/>
    </reaction>
</comment>
<comment type="cofactor">
    <cofactor evidence="1">
        <name>Fe(2+)</name>
        <dbReference type="ChEBI" id="CHEBI:29033"/>
    </cofactor>
</comment>
<comment type="pathway">
    <text evidence="4">Protein modification; peptidyl-diphthamide biosynthesis.</text>
</comment>
<comment type="subunit">
    <text evidence="1 2">Component of the 2-(3-amino-3-carboxypropyl)histidine synthase complex composed of DPH1, DPH2, DPH3 and a NADH-dependent reductase (By similarity). Interacts with SERGEF (By similarity).</text>
</comment>
<comment type="subcellular location">
    <subcellularLocation>
        <location evidence="2">Cytoplasm</location>
    </subcellularLocation>
    <subcellularLocation>
        <location evidence="2">Nucleus</location>
    </subcellularLocation>
</comment>
<comment type="domain">
    <text evidence="1">The DPH-type metal-binding (MB) domain can also bind zinc. However, iron is the physiological binding partner as zinc binding impairs the protein electron donor function.</text>
</comment>
<comment type="similarity">
    <text evidence="4">Belongs to the DPH3 family.</text>
</comment>
<name>DPH3_CRIGR</name>
<reference key="1">
    <citation type="journal article" date="2003" name="Mol. Cell">
        <title>Retroviral insertional mutagenesis identifies a small protein required for synthesis of diphthamide, the target of bacterial ADP-ribosylating toxins.</title>
        <authorList>
            <person name="Liu S."/>
            <person name="Leppla S.H."/>
        </authorList>
    </citation>
    <scope>NUCLEOTIDE SEQUENCE [GENOMIC DNA]</scope>
    <scope>FUNCTION</scope>
</reference>
<proteinExistence type="inferred from homology"/>